<organism>
    <name type="scientific">Aquarana catesbeiana</name>
    <name type="common">American bullfrog</name>
    <name type="synonym">Rana catesbeiana</name>
    <dbReference type="NCBI Taxonomy" id="8400"/>
    <lineage>
        <taxon>Eukaryota</taxon>
        <taxon>Metazoa</taxon>
        <taxon>Chordata</taxon>
        <taxon>Craniata</taxon>
        <taxon>Vertebrata</taxon>
        <taxon>Euteleostomi</taxon>
        <taxon>Amphibia</taxon>
        <taxon>Batrachia</taxon>
        <taxon>Anura</taxon>
        <taxon>Neobatrachia</taxon>
        <taxon>Ranoidea</taxon>
        <taxon>Ranidae</taxon>
        <taxon>Aquarana</taxon>
    </lineage>
</organism>
<accession>C1C4M8</accession>
<gene>
    <name evidence="1" type="primary">apip</name>
</gene>
<proteinExistence type="evidence at transcript level"/>
<evidence type="ECO:0000255" key="1">
    <source>
        <dbReference type="HAMAP-Rule" id="MF_03116"/>
    </source>
</evidence>
<sequence>MYYCNGENCNQTDSAKEKGHPRHLIPELCRQFYNLGWVTGTGGGISMKHGEEIYIAPSGVQKERIQPDDLFVCDIDERDISCPPPYKNLKKSQCTPLFMNAYTLRGAGAVIHTHSKSAVLATLLFPGKEFRITHQEMIKGIKKGSSGDYYRYDDLLVVPIVENTPEEKDLKDRMARAMTEYPDSCAVLVRRHGVYVWGDTWEKAKTMCECYDYLFDIAVQMKQLGLDPAAHPAEEKGIV</sequence>
<reference key="1">
    <citation type="submission" date="2009-04" db="EMBL/GenBank/DDBJ databases">
        <title>Rana catesbeiana ESTs and full-length cDNAs.</title>
        <authorList>
            <person name="Helbing C.C."/>
            <person name="Veldhoen N."/>
            <person name="Leong J."/>
            <person name="Koop B.F."/>
        </authorList>
    </citation>
    <scope>NUCLEOTIDE SEQUENCE [LARGE SCALE MRNA]</scope>
</reference>
<keyword id="KW-0028">Amino-acid biosynthesis</keyword>
<keyword id="KW-0053">Apoptosis</keyword>
<keyword id="KW-0963">Cytoplasm</keyword>
<keyword id="KW-0456">Lyase</keyword>
<keyword id="KW-0479">Metal-binding</keyword>
<keyword id="KW-0486">Methionine biosynthesis</keyword>
<keyword id="KW-0862">Zinc</keyword>
<comment type="function">
    <text evidence="1">Catalyzes the dehydration of methylthioribulose-1-phosphate (MTRu-1-P) into 2,3-diketo-5-methylthiopentyl-1-phosphate (DK-MTP-1-P). Functions in the methionine salvage pathway. May play a role in apoptosis.</text>
</comment>
<comment type="catalytic activity">
    <reaction evidence="1">
        <text>5-(methylsulfanyl)-D-ribulose 1-phosphate = 5-methylsulfanyl-2,3-dioxopentyl phosphate + H2O</text>
        <dbReference type="Rhea" id="RHEA:15549"/>
        <dbReference type="ChEBI" id="CHEBI:15377"/>
        <dbReference type="ChEBI" id="CHEBI:58548"/>
        <dbReference type="ChEBI" id="CHEBI:58828"/>
        <dbReference type="EC" id="4.2.1.109"/>
    </reaction>
</comment>
<comment type="cofactor">
    <cofactor evidence="1">
        <name>Zn(2+)</name>
        <dbReference type="ChEBI" id="CHEBI:29105"/>
    </cofactor>
    <text evidence="1">Binds 1 zinc ion per subunit.</text>
</comment>
<comment type="pathway">
    <text evidence="1">Amino-acid biosynthesis; L-methionine biosynthesis via salvage pathway; L-methionine from S-methyl-5-thio-alpha-D-ribose 1-phosphate: step 2/6.</text>
</comment>
<comment type="subcellular location">
    <subcellularLocation>
        <location evidence="1">Cytoplasm</location>
    </subcellularLocation>
</comment>
<comment type="similarity">
    <text evidence="1">Belongs to the aldolase class II family. MtnB subfamily.</text>
</comment>
<dbReference type="EC" id="4.2.1.109" evidence="1"/>
<dbReference type="EMBL" id="BT081807">
    <property type="protein sequence ID" value="ACO51938.1"/>
    <property type="molecule type" value="mRNA"/>
</dbReference>
<dbReference type="SMR" id="C1C4M8"/>
<dbReference type="OrthoDB" id="191080at2759"/>
<dbReference type="UniPathway" id="UPA00904">
    <property type="reaction ID" value="UER00875"/>
</dbReference>
<dbReference type="GO" id="GO:0005737">
    <property type="term" value="C:cytoplasm"/>
    <property type="evidence" value="ECO:0007669"/>
    <property type="project" value="UniProtKB-SubCell"/>
</dbReference>
<dbReference type="GO" id="GO:0046570">
    <property type="term" value="F:methylthioribulose 1-phosphate dehydratase activity"/>
    <property type="evidence" value="ECO:0000250"/>
    <property type="project" value="UniProtKB"/>
</dbReference>
<dbReference type="GO" id="GO:0008270">
    <property type="term" value="F:zinc ion binding"/>
    <property type="evidence" value="ECO:0000250"/>
    <property type="project" value="UniProtKB"/>
</dbReference>
<dbReference type="GO" id="GO:0006915">
    <property type="term" value="P:apoptotic process"/>
    <property type="evidence" value="ECO:0007669"/>
    <property type="project" value="UniProtKB-KW"/>
</dbReference>
<dbReference type="GO" id="GO:0019509">
    <property type="term" value="P:L-methionine salvage from methylthioadenosine"/>
    <property type="evidence" value="ECO:0000250"/>
    <property type="project" value="UniProtKB"/>
</dbReference>
<dbReference type="FunFam" id="3.40.225.10:FF:000003">
    <property type="entry name" value="Methylthioribulose-1-phosphate dehydratase"/>
    <property type="match status" value="1"/>
</dbReference>
<dbReference type="Gene3D" id="3.40.225.10">
    <property type="entry name" value="Class II aldolase/adducin N-terminal domain"/>
    <property type="match status" value="1"/>
</dbReference>
<dbReference type="HAMAP" id="MF_03116">
    <property type="entry name" value="Salvage_MtnB_euk"/>
    <property type="match status" value="1"/>
</dbReference>
<dbReference type="InterPro" id="IPR001303">
    <property type="entry name" value="Aldolase_II/adducin_N"/>
</dbReference>
<dbReference type="InterPro" id="IPR036409">
    <property type="entry name" value="Aldolase_II/adducin_N_sf"/>
</dbReference>
<dbReference type="InterPro" id="IPR017714">
    <property type="entry name" value="MethylthioRu-1-P_deHdtase_MtnB"/>
</dbReference>
<dbReference type="InterPro" id="IPR027514">
    <property type="entry name" value="Salvage_MtnB_euk"/>
</dbReference>
<dbReference type="NCBIfam" id="TIGR03328">
    <property type="entry name" value="salvage_mtnB"/>
    <property type="match status" value="1"/>
</dbReference>
<dbReference type="PANTHER" id="PTHR10640">
    <property type="entry name" value="METHYLTHIORIBULOSE-1-PHOSPHATE DEHYDRATASE"/>
    <property type="match status" value="1"/>
</dbReference>
<dbReference type="PANTHER" id="PTHR10640:SF7">
    <property type="entry name" value="METHYLTHIORIBULOSE-1-PHOSPHATE DEHYDRATASE"/>
    <property type="match status" value="1"/>
</dbReference>
<dbReference type="Pfam" id="PF00596">
    <property type="entry name" value="Aldolase_II"/>
    <property type="match status" value="1"/>
</dbReference>
<dbReference type="SMART" id="SM01007">
    <property type="entry name" value="Aldolase_II"/>
    <property type="match status" value="1"/>
</dbReference>
<dbReference type="SUPFAM" id="SSF53639">
    <property type="entry name" value="AraD/HMP-PK domain-like"/>
    <property type="match status" value="1"/>
</dbReference>
<protein>
    <recommendedName>
        <fullName evidence="1">Methylthioribulose-1-phosphate dehydratase</fullName>
        <shortName evidence="1">MTRu-1-P dehydratase</shortName>
        <ecNumber evidence="1">4.2.1.109</ecNumber>
    </recommendedName>
    <alternativeName>
        <fullName evidence="1">APAF1-interacting protein homolog</fullName>
    </alternativeName>
</protein>
<name>MTNB_AQUCT</name>
<feature type="chain" id="PRO_0000393776" description="Methylthioribulose-1-phosphate dehydratase">
    <location>
        <begin position="1"/>
        <end position="239"/>
    </location>
</feature>
<feature type="active site" description="Proton donor/acceptor" evidence="1">
    <location>
        <position position="136"/>
    </location>
</feature>
<feature type="binding site" evidence="1">
    <location>
        <position position="94"/>
    </location>
    <ligand>
        <name>substrate</name>
    </ligand>
</feature>
<feature type="binding site" evidence="1">
    <location>
        <position position="112"/>
    </location>
    <ligand>
        <name>Zn(2+)</name>
        <dbReference type="ChEBI" id="CHEBI:29105"/>
    </ligand>
</feature>
<feature type="binding site" evidence="1">
    <location>
        <position position="114"/>
    </location>
    <ligand>
        <name>Zn(2+)</name>
        <dbReference type="ChEBI" id="CHEBI:29105"/>
    </ligand>
</feature>
<feature type="binding site" evidence="1">
    <location>
        <position position="192"/>
    </location>
    <ligand>
        <name>Zn(2+)</name>
        <dbReference type="ChEBI" id="CHEBI:29105"/>
    </ligand>
</feature>